<reference key="1">
    <citation type="journal article" date="1996" name="DNA Res.">
        <title>A 570-kb DNA sequence of the Escherichia coli K-12 genome corresponding to the 28.0-40.1 min region on the linkage map.</title>
        <authorList>
            <person name="Aiba H."/>
            <person name="Baba T."/>
            <person name="Fujita K."/>
            <person name="Hayashi K."/>
            <person name="Inada T."/>
            <person name="Isono K."/>
            <person name="Itoh T."/>
            <person name="Kasai H."/>
            <person name="Kashimoto K."/>
            <person name="Kimura S."/>
            <person name="Kitakawa M."/>
            <person name="Kitagawa M."/>
            <person name="Makino K."/>
            <person name="Miki T."/>
            <person name="Mizobuchi K."/>
            <person name="Mori H."/>
            <person name="Mori T."/>
            <person name="Motomura K."/>
            <person name="Nakade S."/>
            <person name="Nakamura Y."/>
            <person name="Nashimoto H."/>
            <person name="Nishio Y."/>
            <person name="Oshima T."/>
            <person name="Saito N."/>
            <person name="Sampei G."/>
            <person name="Seki Y."/>
            <person name="Sivasundaram S."/>
            <person name="Tagami H."/>
            <person name="Takeda J."/>
            <person name="Takemoto K."/>
            <person name="Takeuchi Y."/>
            <person name="Wada C."/>
            <person name="Yamamoto Y."/>
            <person name="Horiuchi T."/>
        </authorList>
    </citation>
    <scope>NUCLEOTIDE SEQUENCE [LARGE SCALE GENOMIC DNA]</scope>
    <source>
        <strain>K12 / W3110 / ATCC 27325 / DSM 5911</strain>
    </source>
</reference>
<reference key="2">
    <citation type="journal article" date="1997" name="Science">
        <title>The complete genome sequence of Escherichia coli K-12.</title>
        <authorList>
            <person name="Blattner F.R."/>
            <person name="Plunkett G. III"/>
            <person name="Bloch C.A."/>
            <person name="Perna N.T."/>
            <person name="Burland V."/>
            <person name="Riley M."/>
            <person name="Collado-Vides J."/>
            <person name="Glasner J.D."/>
            <person name="Rode C.K."/>
            <person name="Mayhew G.F."/>
            <person name="Gregor J."/>
            <person name="Davis N.W."/>
            <person name="Kirkpatrick H.A."/>
            <person name="Goeden M.A."/>
            <person name="Rose D.J."/>
            <person name="Mau B."/>
            <person name="Shao Y."/>
        </authorList>
    </citation>
    <scope>NUCLEOTIDE SEQUENCE [LARGE SCALE GENOMIC DNA]</scope>
    <source>
        <strain>K12 / MG1655 / ATCC 47076</strain>
    </source>
</reference>
<reference key="3">
    <citation type="journal article" date="2006" name="Mol. Syst. Biol.">
        <title>Highly accurate genome sequences of Escherichia coli K-12 strains MG1655 and W3110.</title>
        <authorList>
            <person name="Hayashi K."/>
            <person name="Morooka N."/>
            <person name="Yamamoto Y."/>
            <person name="Fujita K."/>
            <person name="Isono K."/>
            <person name="Choi S."/>
            <person name="Ohtsubo E."/>
            <person name="Baba T."/>
            <person name="Wanner B.L."/>
            <person name="Mori H."/>
            <person name="Horiuchi T."/>
        </authorList>
    </citation>
    <scope>NUCLEOTIDE SEQUENCE [LARGE SCALE GENOMIC DNA]</scope>
    <source>
        <strain>K12 / W3110 / ATCC 27325 / DSM 5911</strain>
    </source>
</reference>
<accession>P76161</accession>
<accession>P77604</accession>
<dbReference type="EMBL" id="U00096">
    <property type="protein sequence ID" value="AAC74632.2"/>
    <property type="molecule type" value="Genomic_DNA"/>
</dbReference>
<dbReference type="EMBL" id="AP009048">
    <property type="protein sequence ID" value="BAA15258.1"/>
    <property type="molecule type" value="Genomic_DNA"/>
</dbReference>
<dbReference type="PIR" id="B64911">
    <property type="entry name" value="B64911"/>
</dbReference>
<dbReference type="RefSeq" id="NP_416077.4">
    <property type="nucleotide sequence ID" value="NC_000913.3"/>
</dbReference>
<dbReference type="RefSeq" id="WP_001047135.1">
    <property type="nucleotide sequence ID" value="NZ_SSUV01000001.1"/>
</dbReference>
<dbReference type="SMR" id="P76161"/>
<dbReference type="BioGRID" id="4261260">
    <property type="interactions" value="14"/>
</dbReference>
<dbReference type="BioGRID" id="850463">
    <property type="interactions" value="3"/>
</dbReference>
<dbReference type="DIP" id="DIP-28061N"/>
<dbReference type="FunCoup" id="P76161">
    <property type="interactions" value="220"/>
</dbReference>
<dbReference type="IntAct" id="P76161">
    <property type="interactions" value="5"/>
</dbReference>
<dbReference type="STRING" id="511145.b1559"/>
<dbReference type="PaxDb" id="511145-b1559"/>
<dbReference type="EnsemblBacteria" id="AAC74632">
    <property type="protein sequence ID" value="AAC74632"/>
    <property type="gene ID" value="b1559"/>
</dbReference>
<dbReference type="GeneID" id="946103"/>
<dbReference type="KEGG" id="ecj:JW1551"/>
<dbReference type="KEGG" id="eco:b1559"/>
<dbReference type="KEGG" id="ecoc:C3026_08995"/>
<dbReference type="PATRIC" id="fig|1411691.4.peg.704"/>
<dbReference type="EchoBASE" id="EB3593"/>
<dbReference type="eggNOG" id="COG0484">
    <property type="taxonomic scope" value="Bacteria"/>
</dbReference>
<dbReference type="HOGENOM" id="CLU_095309_0_0_6"/>
<dbReference type="InParanoid" id="P76161"/>
<dbReference type="OMA" id="EKELCQH"/>
<dbReference type="OrthoDB" id="6572202at2"/>
<dbReference type="PhylomeDB" id="P76161"/>
<dbReference type="BioCyc" id="EcoCyc:G6830-MONOMER"/>
<dbReference type="PRO" id="PR:P76161"/>
<dbReference type="Proteomes" id="UP000000625">
    <property type="component" value="Chromosome"/>
</dbReference>
<dbReference type="GO" id="GO:0003677">
    <property type="term" value="F:DNA binding"/>
    <property type="evidence" value="ECO:0007669"/>
    <property type="project" value="UniProtKB-KW"/>
</dbReference>
<dbReference type="GO" id="GO:0031564">
    <property type="term" value="P:transcription antitermination"/>
    <property type="evidence" value="ECO:0007669"/>
    <property type="project" value="UniProtKB-KW"/>
</dbReference>
<dbReference type="Gene3D" id="1.10.274.110">
    <property type="match status" value="2"/>
</dbReference>
<dbReference type="HAMAP" id="MF_04158">
    <property type="entry name" value="Antitermination_lambda"/>
    <property type="match status" value="1"/>
</dbReference>
<dbReference type="InterPro" id="IPR038500">
    <property type="entry name" value="Antitermination_sf"/>
</dbReference>
<dbReference type="InterPro" id="IPR003222">
    <property type="entry name" value="Antitermntn"/>
</dbReference>
<dbReference type="InterPro" id="IPR036410">
    <property type="entry name" value="HSP_DnaJ_Cys-rich_dom_sf"/>
</dbReference>
<dbReference type="PANTHER" id="PTHR15852">
    <property type="entry name" value="PLASTID TRANSCRIPTIONALLY ACTIVE PROTEIN"/>
    <property type="match status" value="1"/>
</dbReference>
<dbReference type="PANTHER" id="PTHR15852:SF54">
    <property type="entry name" value="PROTEIN SSUH2 HOMOLOG"/>
    <property type="match status" value="1"/>
</dbReference>
<dbReference type="Pfam" id="PF03589">
    <property type="entry name" value="Antiterm"/>
    <property type="match status" value="2"/>
</dbReference>
<dbReference type="SUPFAM" id="SSF57938">
    <property type="entry name" value="DnaJ/Hsp40 cysteine-rich domain"/>
    <property type="match status" value="1"/>
</dbReference>
<comment type="function">
    <text evidence="1">Positively regulate expression of some phage genes. Bacterial host RNA polymerase modified by antitermination proteins transcribes through termination sites that otherwise prevent expression of the regulated genes (By similarity).</text>
</comment>
<comment type="similarity">
    <text evidence="2">Belongs to the phage antitermination Q type 2 family.</text>
</comment>
<feature type="chain" id="PRO_0000073896" description="Prophage antitermination protein Q homolog QuuQ">
    <location>
        <begin position="1"/>
        <end position="250"/>
    </location>
</feature>
<gene>
    <name type="primary">quuQ</name>
    <name type="synonym">ydfT</name>
    <name type="ordered locus">b1559</name>
    <name type="ordered locus">JW1551</name>
</gene>
<protein>
    <recommendedName>
        <fullName evidence="2">Prophage antitermination protein Q homolog QuuQ</fullName>
    </recommendedName>
    <alternativeName>
        <fullName>Antitermination protein Q homolog from lambdoid prophage Qin</fullName>
    </alternativeName>
</protein>
<organism>
    <name type="scientific">Escherichia coli (strain K12)</name>
    <dbReference type="NCBI Taxonomy" id="83333"/>
    <lineage>
        <taxon>Bacteria</taxon>
        <taxon>Pseudomonadati</taxon>
        <taxon>Pseudomonadota</taxon>
        <taxon>Gammaproteobacteria</taxon>
        <taxon>Enterobacterales</taxon>
        <taxon>Enterobacteriaceae</taxon>
        <taxon>Escherichia</taxon>
    </lineage>
</organism>
<keyword id="KW-0238">DNA-binding</keyword>
<keyword id="KW-1185">Reference proteome</keyword>
<keyword id="KW-0804">Transcription</keyword>
<keyword id="KW-0889">Transcription antitermination</keyword>
<keyword id="KW-0805">Transcription regulation</keyword>
<evidence type="ECO:0000250" key="1"/>
<evidence type="ECO:0000305" key="2"/>
<proteinExistence type="inferred from homology"/>
<name>REQ2_ECOLI</name>
<sequence>MNLEALPKYYSPKSPKLSDDAPATGTGCLTITDVMAAQGMVQSKAPLGLALFLAKVGVQDPQFAIEGLLNYAMALDNPTLNKLSEEIRLQIIPYLVSFAFADYSRSAASKARCEHCSGTGFYNVLREVVKHYRRGESVIKEEWVKELCQHCHGKGEASTACRGCKGKGIVLDEKRTRFHGVPVYKICGRCNGNRFSRLPTTLARRHVQKLVPDLTDYQWYKGYADVIGKLVTKCWQEEAYAEAQLRKVTR</sequence>